<accession>P0CY71</accession>
<protein>
    <recommendedName>
        <fullName>Conotoxin Bu13</fullName>
    </recommendedName>
</protein>
<name>O17D_CONBU</name>
<proteinExistence type="evidence at transcript level"/>
<evidence type="ECO:0000250" key="1"/>
<evidence type="ECO:0000255" key="2"/>
<evidence type="ECO:0000305" key="3"/>
<comment type="subcellular location">
    <subcellularLocation>
        <location evidence="1">Secreted</location>
    </subcellularLocation>
</comment>
<comment type="tissue specificity">
    <text>Expressed by the venom duct.</text>
</comment>
<comment type="domain">
    <text>The presence of a 'disulfide through disulfide knot' structurally defines this protein as a knottin.</text>
</comment>
<comment type="domain">
    <text>The cysteine framework is VI/VII (C-C-CC-C-C).</text>
</comment>
<comment type="similarity">
    <text evidence="3">Belongs to the conotoxin O1 superfamily.</text>
</comment>
<reference key="1">
    <citation type="journal article" date="2011" name="BMC Genomics">
        <title>Characterization of the Conus bullatus genome and its venom-duct transcriptome.</title>
        <authorList>
            <person name="Hu H."/>
            <person name="Bandyopadhyay P.K."/>
            <person name="Olivera B.M."/>
            <person name="Yandell M."/>
        </authorList>
    </citation>
    <scope>NUCLEOTIDE SEQUENCE [MRNA]</scope>
    <source>
        <tissue>Venom duct</tissue>
    </source>
</reference>
<feature type="signal peptide" evidence="2">
    <location>
        <begin position="1" status="less than"/>
        <end position="1"/>
    </location>
</feature>
<feature type="propeptide" id="PRO_0000409958" evidence="1">
    <location>
        <begin position="2"/>
        <end position="24"/>
    </location>
</feature>
<feature type="peptide" id="PRO_0000409959" description="Conotoxin Bu13">
    <location>
        <begin position="25"/>
        <end position="50"/>
    </location>
</feature>
<feature type="disulfide bond" evidence="1">
    <location>
        <begin position="25"/>
        <end position="40"/>
    </location>
</feature>
<feature type="disulfide bond" evidence="1">
    <location>
        <begin position="32"/>
        <end position="44"/>
    </location>
</feature>
<feature type="disulfide bond" evidence="1">
    <location>
        <begin position="39"/>
        <end position="49"/>
    </location>
</feature>
<feature type="non-terminal residue">
    <location>
        <position position="1"/>
    </location>
</feature>
<organism>
    <name type="scientific">Conus bullatus</name>
    <name type="common">Bubble cone</name>
    <dbReference type="NCBI Taxonomy" id="89438"/>
    <lineage>
        <taxon>Eukaryota</taxon>
        <taxon>Metazoa</taxon>
        <taxon>Spiralia</taxon>
        <taxon>Lophotrochozoa</taxon>
        <taxon>Mollusca</taxon>
        <taxon>Gastropoda</taxon>
        <taxon>Caenogastropoda</taxon>
        <taxon>Neogastropoda</taxon>
        <taxon>Conoidea</taxon>
        <taxon>Conidae</taxon>
        <taxon>Conus</taxon>
        <taxon>Textilia</taxon>
    </lineage>
</organism>
<dbReference type="SMR" id="P0CY71"/>
<dbReference type="GO" id="GO:0005576">
    <property type="term" value="C:extracellular region"/>
    <property type="evidence" value="ECO:0007669"/>
    <property type="project" value="UniProtKB-SubCell"/>
</dbReference>
<dbReference type="GO" id="GO:0099106">
    <property type="term" value="F:ion channel regulator activity"/>
    <property type="evidence" value="ECO:0007669"/>
    <property type="project" value="UniProtKB-KW"/>
</dbReference>
<dbReference type="GO" id="GO:0090729">
    <property type="term" value="F:toxin activity"/>
    <property type="evidence" value="ECO:0007669"/>
    <property type="project" value="UniProtKB-KW"/>
</dbReference>
<dbReference type="SUPFAM" id="SSF57059">
    <property type="entry name" value="omega toxin-like"/>
    <property type="match status" value="1"/>
</dbReference>
<keyword id="KW-1015">Disulfide bond</keyword>
<keyword id="KW-0872">Ion channel impairing toxin</keyword>
<keyword id="KW-0960">Knottin</keyword>
<keyword id="KW-0528">Neurotoxin</keyword>
<keyword id="KW-0964">Secreted</keyword>
<keyword id="KW-0732">Signal</keyword>
<keyword id="KW-0800">Toxin</keyword>
<sequence>AEDSRGTQLHRALRKTTKLSLSIRCKGPGASCIRIAYNCCKYSCRNGKCS</sequence>